<evidence type="ECO:0000255" key="1">
    <source>
        <dbReference type="HAMAP-Rule" id="MF_00003"/>
    </source>
</evidence>
<dbReference type="EMBL" id="AL935263">
    <property type="protein sequence ID" value="CCC79285.1"/>
    <property type="molecule type" value="Genomic_DNA"/>
</dbReference>
<dbReference type="RefSeq" id="WP_011101640.1">
    <property type="nucleotide sequence ID" value="NC_004567.2"/>
</dbReference>
<dbReference type="RefSeq" id="YP_004889799.1">
    <property type="nucleotide sequence ID" value="NC_004567.2"/>
</dbReference>
<dbReference type="SMR" id="Q88VK8"/>
<dbReference type="STRING" id="220668.lp_2039"/>
<dbReference type="EnsemblBacteria" id="CCC79285">
    <property type="protein sequence ID" value="CCC79285"/>
    <property type="gene ID" value="lp_2039"/>
</dbReference>
<dbReference type="KEGG" id="lpl:lp_2039"/>
<dbReference type="PATRIC" id="fig|220668.9.peg.1724"/>
<dbReference type="eggNOG" id="COG0858">
    <property type="taxonomic scope" value="Bacteria"/>
</dbReference>
<dbReference type="HOGENOM" id="CLU_089475_3_0_9"/>
<dbReference type="OrthoDB" id="307788at2"/>
<dbReference type="PhylomeDB" id="Q88VK8"/>
<dbReference type="Proteomes" id="UP000000432">
    <property type="component" value="Chromosome"/>
</dbReference>
<dbReference type="GO" id="GO:0005829">
    <property type="term" value="C:cytosol"/>
    <property type="evidence" value="ECO:0007669"/>
    <property type="project" value="TreeGrafter"/>
</dbReference>
<dbReference type="GO" id="GO:0043024">
    <property type="term" value="F:ribosomal small subunit binding"/>
    <property type="evidence" value="ECO:0007669"/>
    <property type="project" value="TreeGrafter"/>
</dbReference>
<dbReference type="GO" id="GO:0030490">
    <property type="term" value="P:maturation of SSU-rRNA"/>
    <property type="evidence" value="ECO:0007669"/>
    <property type="project" value="UniProtKB-UniRule"/>
</dbReference>
<dbReference type="Gene3D" id="3.30.300.20">
    <property type="match status" value="1"/>
</dbReference>
<dbReference type="HAMAP" id="MF_00003">
    <property type="entry name" value="RbfA"/>
    <property type="match status" value="1"/>
</dbReference>
<dbReference type="InterPro" id="IPR015946">
    <property type="entry name" value="KH_dom-like_a/b"/>
</dbReference>
<dbReference type="InterPro" id="IPR000238">
    <property type="entry name" value="RbfA"/>
</dbReference>
<dbReference type="InterPro" id="IPR023799">
    <property type="entry name" value="RbfA_dom_sf"/>
</dbReference>
<dbReference type="InterPro" id="IPR020053">
    <property type="entry name" value="Ribosome-bd_factorA_CS"/>
</dbReference>
<dbReference type="NCBIfam" id="TIGR00082">
    <property type="entry name" value="rbfA"/>
    <property type="match status" value="1"/>
</dbReference>
<dbReference type="PANTHER" id="PTHR33515">
    <property type="entry name" value="RIBOSOME-BINDING FACTOR A, CHLOROPLASTIC-RELATED"/>
    <property type="match status" value="1"/>
</dbReference>
<dbReference type="PANTHER" id="PTHR33515:SF1">
    <property type="entry name" value="RIBOSOME-BINDING FACTOR A, CHLOROPLASTIC-RELATED"/>
    <property type="match status" value="1"/>
</dbReference>
<dbReference type="Pfam" id="PF02033">
    <property type="entry name" value="RBFA"/>
    <property type="match status" value="1"/>
</dbReference>
<dbReference type="SUPFAM" id="SSF89919">
    <property type="entry name" value="Ribosome-binding factor A, RbfA"/>
    <property type="match status" value="1"/>
</dbReference>
<dbReference type="PROSITE" id="PS01319">
    <property type="entry name" value="RBFA"/>
    <property type="match status" value="1"/>
</dbReference>
<reference key="1">
    <citation type="journal article" date="2003" name="Proc. Natl. Acad. Sci. U.S.A.">
        <title>Complete genome sequence of Lactobacillus plantarum WCFS1.</title>
        <authorList>
            <person name="Kleerebezem M."/>
            <person name="Boekhorst J."/>
            <person name="van Kranenburg R."/>
            <person name="Molenaar D."/>
            <person name="Kuipers O.P."/>
            <person name="Leer R."/>
            <person name="Tarchini R."/>
            <person name="Peters S.A."/>
            <person name="Sandbrink H.M."/>
            <person name="Fiers M.W.E.J."/>
            <person name="Stiekema W."/>
            <person name="Klein Lankhorst R.M."/>
            <person name="Bron P.A."/>
            <person name="Hoffer S.M."/>
            <person name="Nierop Groot M.N."/>
            <person name="Kerkhoven R."/>
            <person name="De Vries M."/>
            <person name="Ursing B."/>
            <person name="De Vos W.M."/>
            <person name="Siezen R.J."/>
        </authorList>
    </citation>
    <scope>NUCLEOTIDE SEQUENCE [LARGE SCALE GENOMIC DNA]</scope>
    <source>
        <strain>ATCC BAA-793 / NCIMB 8826 / WCFS1</strain>
    </source>
</reference>
<reference key="2">
    <citation type="journal article" date="2012" name="J. Bacteriol.">
        <title>Complete resequencing and reannotation of the Lactobacillus plantarum WCFS1 genome.</title>
        <authorList>
            <person name="Siezen R.J."/>
            <person name="Francke C."/>
            <person name="Renckens B."/>
            <person name="Boekhorst J."/>
            <person name="Wels M."/>
            <person name="Kleerebezem M."/>
            <person name="van Hijum S.A."/>
        </authorList>
    </citation>
    <scope>NUCLEOTIDE SEQUENCE [LARGE SCALE GENOMIC DNA]</scope>
    <scope>GENOME REANNOTATION</scope>
    <source>
        <strain>ATCC BAA-793 / NCIMB 8826 / WCFS1</strain>
    </source>
</reference>
<name>RBFA_LACPL</name>
<accession>Q88VK8</accession>
<accession>F9UPZ6</accession>
<feature type="chain" id="PRO_0000102679" description="Ribosome-binding factor A">
    <location>
        <begin position="1"/>
        <end position="117"/>
    </location>
</feature>
<proteinExistence type="inferred from homology"/>
<comment type="function">
    <text evidence="1">One of several proteins that assist in the late maturation steps of the functional core of the 30S ribosomal subunit. Associates with free 30S ribosomal subunits (but not with 30S subunits that are part of 70S ribosomes or polysomes). Required for efficient processing of 16S rRNA. May interact with the 5'-terminal helix region of 16S rRNA.</text>
</comment>
<comment type="subunit">
    <text evidence="1">Monomer. Binds 30S ribosomal subunits, but not 50S ribosomal subunits or 70S ribosomes.</text>
</comment>
<comment type="subcellular location">
    <subcellularLocation>
        <location evidence="1">Cytoplasm</location>
    </subcellularLocation>
</comment>
<comment type="similarity">
    <text evidence="1">Belongs to the RbfA family.</text>
</comment>
<keyword id="KW-0963">Cytoplasm</keyword>
<keyword id="KW-1185">Reference proteome</keyword>
<keyword id="KW-0690">Ribosome biogenesis</keyword>
<protein>
    <recommendedName>
        <fullName evidence="1">Ribosome-binding factor A</fullName>
    </recommendedName>
</protein>
<organism>
    <name type="scientific">Lactiplantibacillus plantarum (strain ATCC BAA-793 / NCIMB 8826 / WCFS1)</name>
    <name type="common">Lactobacillus plantarum</name>
    <dbReference type="NCBI Taxonomy" id="220668"/>
    <lineage>
        <taxon>Bacteria</taxon>
        <taxon>Bacillati</taxon>
        <taxon>Bacillota</taxon>
        <taxon>Bacilli</taxon>
        <taxon>Lactobacillales</taxon>
        <taxon>Lactobacillaceae</taxon>
        <taxon>Lactiplantibacillus</taxon>
    </lineage>
</organism>
<gene>
    <name evidence="1" type="primary">rbfA</name>
    <name type="ordered locus">lp_2039</name>
</gene>
<sequence>MAQHYRVGRLEQEIEREVNDILLKRVRDPRVAGVTITGVTVTGDLQQATIYYSILSDKASDGEKTAAGLAKATGLIRSELGSRLSIYKTPELTFERDNSVQYGSRIDELINNLKRQD</sequence>